<dbReference type="EMBL" id="CP017630">
    <property type="protein sequence ID" value="AOW31283.1"/>
    <property type="molecule type" value="Genomic_DNA"/>
</dbReference>
<dbReference type="RefSeq" id="XP_711711.1">
    <property type="nucleotide sequence ID" value="XM_706619.1"/>
</dbReference>
<dbReference type="SMR" id="Q59PR9"/>
<dbReference type="BioGRID" id="1229310">
    <property type="interactions" value="1"/>
</dbReference>
<dbReference type="FunCoup" id="Q59PR9">
    <property type="interactions" value="301"/>
</dbReference>
<dbReference type="STRING" id="237561.Q59PR9"/>
<dbReference type="EnsemblFungi" id="CR_05670C_A-T">
    <property type="protein sequence ID" value="CR_05670C_A-T-p1"/>
    <property type="gene ID" value="CR_05670C_A"/>
</dbReference>
<dbReference type="GeneID" id="3646685"/>
<dbReference type="KEGG" id="cal:CAALFM_CR05670CA"/>
<dbReference type="CGD" id="CAL0000192851">
    <property type="gene designation" value="HMO1"/>
</dbReference>
<dbReference type="VEuPathDB" id="FungiDB:CR_05670C_A"/>
<dbReference type="eggNOG" id="KOG0381">
    <property type="taxonomic scope" value="Eukaryota"/>
</dbReference>
<dbReference type="HOGENOM" id="CLU_076155_1_0_1"/>
<dbReference type="InParanoid" id="Q59PR9"/>
<dbReference type="OMA" id="DKWKQAY"/>
<dbReference type="OrthoDB" id="5550281at2759"/>
<dbReference type="PRO" id="PR:Q59PR9"/>
<dbReference type="Proteomes" id="UP000000559">
    <property type="component" value="Chromosome R"/>
</dbReference>
<dbReference type="GO" id="GO:0005829">
    <property type="term" value="C:cytosol"/>
    <property type="evidence" value="ECO:0007669"/>
    <property type="project" value="EnsemblFungi"/>
</dbReference>
<dbReference type="GO" id="GO:0005730">
    <property type="term" value="C:nucleolus"/>
    <property type="evidence" value="ECO:0007669"/>
    <property type="project" value="EnsemblFungi"/>
</dbReference>
<dbReference type="GO" id="GO:0033553">
    <property type="term" value="C:rDNA heterochromatin"/>
    <property type="evidence" value="ECO:0007669"/>
    <property type="project" value="EnsemblFungi"/>
</dbReference>
<dbReference type="GO" id="GO:0032040">
    <property type="term" value="C:small-subunit processome"/>
    <property type="evidence" value="ECO:0007669"/>
    <property type="project" value="EnsemblFungi"/>
</dbReference>
<dbReference type="GO" id="GO:0008301">
    <property type="term" value="F:DNA binding, bending"/>
    <property type="evidence" value="ECO:0007669"/>
    <property type="project" value="EnsemblFungi"/>
</dbReference>
<dbReference type="GO" id="GO:0003690">
    <property type="term" value="F:double-stranded DNA binding"/>
    <property type="evidence" value="ECO:0007669"/>
    <property type="project" value="EnsemblFungi"/>
</dbReference>
<dbReference type="GO" id="GO:0000400">
    <property type="term" value="F:four-way junction DNA binding"/>
    <property type="evidence" value="ECO:0007669"/>
    <property type="project" value="EnsemblFungi"/>
</dbReference>
<dbReference type="GO" id="GO:0043565">
    <property type="term" value="F:sequence-specific DNA binding"/>
    <property type="evidence" value="ECO:0000314"/>
    <property type="project" value="CGD"/>
</dbReference>
<dbReference type="GO" id="GO:0006338">
    <property type="term" value="P:chromatin remodeling"/>
    <property type="evidence" value="ECO:0007669"/>
    <property type="project" value="EnsemblFungi"/>
</dbReference>
<dbReference type="GO" id="GO:0006265">
    <property type="term" value="P:DNA topological change"/>
    <property type="evidence" value="ECO:0007669"/>
    <property type="project" value="EnsemblFungi"/>
</dbReference>
<dbReference type="GO" id="GO:0044182">
    <property type="term" value="P:filamentous growth of a population of unicellular organisms"/>
    <property type="evidence" value="ECO:0000315"/>
    <property type="project" value="CGD"/>
</dbReference>
<dbReference type="GO" id="GO:2000134">
    <property type="term" value="P:negative regulation of G1/S transition of mitotic cell cycle"/>
    <property type="evidence" value="ECO:0000315"/>
    <property type="project" value="CGD"/>
</dbReference>
<dbReference type="GO" id="GO:0044804">
    <property type="term" value="P:nucleophagy"/>
    <property type="evidence" value="ECO:0007669"/>
    <property type="project" value="EnsemblFungi"/>
</dbReference>
<dbReference type="GO" id="GO:2001034">
    <property type="term" value="P:positive regulation of double-strand break repair via nonhomologous end joining"/>
    <property type="evidence" value="ECO:0007669"/>
    <property type="project" value="EnsemblFungi"/>
</dbReference>
<dbReference type="GO" id="GO:0070550">
    <property type="term" value="P:rDNA chromatin condensation"/>
    <property type="evidence" value="ECO:0007669"/>
    <property type="project" value="EnsemblFungi"/>
</dbReference>
<dbReference type="GO" id="GO:0060962">
    <property type="term" value="P:regulation of ribosomal protein gene transcription by RNA polymerase II"/>
    <property type="evidence" value="ECO:0007669"/>
    <property type="project" value="EnsemblFungi"/>
</dbReference>
<dbReference type="GO" id="GO:0006356">
    <property type="term" value="P:regulation of transcription by RNA polymerase I"/>
    <property type="evidence" value="ECO:0007669"/>
    <property type="project" value="EnsemblFungi"/>
</dbReference>
<dbReference type="GO" id="GO:0001174">
    <property type="term" value="P:transcriptional start site selection at RNA polymerase II promoter"/>
    <property type="evidence" value="ECO:0007669"/>
    <property type="project" value="EnsemblFungi"/>
</dbReference>
<dbReference type="Gene3D" id="1.10.30.10">
    <property type="entry name" value="High mobility group box domain"/>
    <property type="match status" value="1"/>
</dbReference>
<dbReference type="InterPro" id="IPR009071">
    <property type="entry name" value="HMG_box_dom"/>
</dbReference>
<dbReference type="InterPro" id="IPR036910">
    <property type="entry name" value="HMG_box_dom_sf"/>
</dbReference>
<dbReference type="InterPro" id="IPR050342">
    <property type="entry name" value="HMGB"/>
</dbReference>
<dbReference type="PANTHER" id="PTHR48112">
    <property type="entry name" value="HIGH MOBILITY GROUP PROTEIN DSP1"/>
    <property type="match status" value="1"/>
</dbReference>
<dbReference type="PANTHER" id="PTHR48112:SF22">
    <property type="entry name" value="MITOCHONDRIAL TRANSCRIPTION FACTOR A, ISOFORM B"/>
    <property type="match status" value="1"/>
</dbReference>
<dbReference type="SMART" id="SM00398">
    <property type="entry name" value="HMG"/>
    <property type="match status" value="1"/>
</dbReference>
<dbReference type="SUPFAM" id="SSF47095">
    <property type="entry name" value="HMG-box"/>
    <property type="match status" value="1"/>
</dbReference>
<dbReference type="PROSITE" id="PS50118">
    <property type="entry name" value="HMG_BOX_2"/>
    <property type="match status" value="1"/>
</dbReference>
<proteinExistence type="evidence at transcript level"/>
<organism>
    <name type="scientific">Candida albicans (strain SC5314 / ATCC MYA-2876)</name>
    <name type="common">Yeast</name>
    <dbReference type="NCBI Taxonomy" id="237561"/>
    <lineage>
        <taxon>Eukaryota</taxon>
        <taxon>Fungi</taxon>
        <taxon>Dikarya</taxon>
        <taxon>Ascomycota</taxon>
        <taxon>Saccharomycotina</taxon>
        <taxon>Pichiomycetes</taxon>
        <taxon>Debaryomycetaceae</taxon>
        <taxon>Candida/Lodderomyces clade</taxon>
        <taxon>Candida</taxon>
    </lineage>
</organism>
<keyword id="KW-0238">DNA-binding</keyword>
<keyword id="KW-0539">Nucleus</keyword>
<keyword id="KW-1185">Reference proteome</keyword>
<keyword id="KW-0804">Transcription</keyword>
<keyword id="KW-0805">Transcription regulation</keyword>
<accession>Q59PR9</accession>
<accession>A0A1D8PT14</accession>
<evidence type="ECO:0000255" key="1">
    <source>
        <dbReference type="PROSITE-ProRule" id="PRU00267"/>
    </source>
</evidence>
<evidence type="ECO:0000256" key="2">
    <source>
        <dbReference type="SAM" id="MobiDB-lite"/>
    </source>
</evidence>
<evidence type="ECO:0000269" key="3">
    <source>
    </source>
</evidence>
<evidence type="ECO:0000269" key="4">
    <source>
    </source>
</evidence>
<gene>
    <name type="primary">HMO1</name>
    <name type="ordered locus">CAALFM_CR05670CA</name>
    <name type="ORF">CaO19.13966</name>
    <name type="ORF">CaO19.6645</name>
</gene>
<name>HMO1_CANAL</name>
<feature type="chain" id="PRO_0000426082" description="Transcriptional regulator HMO1">
    <location>
        <begin position="1"/>
        <end position="223"/>
    </location>
</feature>
<feature type="DNA-binding region" description="HMG box" evidence="1">
    <location>
        <begin position="87"/>
        <end position="160"/>
    </location>
</feature>
<feature type="region of interest" description="Disordered" evidence="2">
    <location>
        <begin position="69"/>
        <end position="89"/>
    </location>
</feature>
<feature type="region of interest" description="Disordered" evidence="2">
    <location>
        <begin position="165"/>
        <end position="223"/>
    </location>
</feature>
<feature type="compositionally biased region" description="Basic and acidic residues" evidence="2">
    <location>
        <begin position="70"/>
        <end position="86"/>
    </location>
</feature>
<feature type="compositionally biased region" description="Basic residues" evidence="2">
    <location>
        <begin position="204"/>
        <end position="223"/>
    </location>
</feature>
<comment type="function">
    <text evidence="3">Transcription factor that binds upstream of hexose and ergosterol metabolism, as well as cell cycle genes. Activates pseudohyphal growth.</text>
</comment>
<comment type="subcellular location">
    <subcellularLocation>
        <location evidence="1">Nucleus</location>
    </subcellularLocation>
</comment>
<comment type="induction">
    <text evidence="4">Repressed hyphae and in biofilm.</text>
</comment>
<protein>
    <recommendedName>
        <fullName>Transcriptional regulator HMO1</fullName>
    </recommendedName>
    <alternativeName>
        <fullName>High mobility group protein 1</fullName>
    </alternativeName>
</protein>
<reference key="1">
    <citation type="journal article" date="2004" name="Proc. Natl. Acad. Sci. U.S.A.">
        <title>The diploid genome sequence of Candida albicans.</title>
        <authorList>
            <person name="Jones T."/>
            <person name="Federspiel N.A."/>
            <person name="Chibana H."/>
            <person name="Dungan J."/>
            <person name="Kalman S."/>
            <person name="Magee B.B."/>
            <person name="Newport G."/>
            <person name="Thorstenson Y.R."/>
            <person name="Agabian N."/>
            <person name="Magee P.T."/>
            <person name="Davis R.W."/>
            <person name="Scherer S."/>
        </authorList>
    </citation>
    <scope>NUCLEOTIDE SEQUENCE [LARGE SCALE GENOMIC DNA]</scope>
    <source>
        <strain>SC5314 / ATCC MYA-2876</strain>
    </source>
</reference>
<reference key="2">
    <citation type="journal article" date="2007" name="Genome Biol.">
        <title>Assembly of the Candida albicans genome into sixteen supercontigs aligned on the eight chromosomes.</title>
        <authorList>
            <person name="van het Hoog M."/>
            <person name="Rast T.J."/>
            <person name="Martchenko M."/>
            <person name="Grindle S."/>
            <person name="Dignard D."/>
            <person name="Hogues H."/>
            <person name="Cuomo C."/>
            <person name="Berriman M."/>
            <person name="Scherer S."/>
            <person name="Magee B.B."/>
            <person name="Whiteway M."/>
            <person name="Chibana H."/>
            <person name="Nantel A."/>
            <person name="Magee P.T."/>
        </authorList>
    </citation>
    <scope>GENOME REANNOTATION</scope>
    <source>
        <strain>SC5314 / ATCC MYA-2876</strain>
    </source>
</reference>
<reference key="3">
    <citation type="journal article" date="2013" name="Genome Biol.">
        <title>Assembly of a phased diploid Candida albicans genome facilitates allele-specific measurements and provides a simple model for repeat and indel structure.</title>
        <authorList>
            <person name="Muzzey D."/>
            <person name="Schwartz K."/>
            <person name="Weissman J.S."/>
            <person name="Sherlock G."/>
        </authorList>
    </citation>
    <scope>NUCLEOTIDE SEQUENCE [LARGE SCALE GENOMIC DNA]</scope>
    <scope>GENOME REANNOTATION</scope>
    <source>
        <strain>SC5314 / ATCC MYA-2876</strain>
    </source>
</reference>
<reference key="4">
    <citation type="journal article" date="2010" name="PLoS Biol.">
        <title>Evolutionary tinkering with conserved components of a transcriptional regulatory network.</title>
        <authorList>
            <person name="Lavoie H."/>
            <person name="Hogues H."/>
            <person name="Mallick J."/>
            <person name="Sellam A."/>
            <person name="Nantel A."/>
            <person name="Whiteway M."/>
        </authorList>
    </citation>
    <scope>FUNCTION</scope>
</reference>
<reference key="5">
    <citation type="journal article" date="2012" name="Cell">
        <title>A recently evolved transcriptional network controls biofilm development in Candida albicans.</title>
        <authorList>
            <person name="Nobile C.J."/>
            <person name="Fox E.P."/>
            <person name="Nett J.E."/>
            <person name="Sorrells T.R."/>
            <person name="Mitrovich Q.M."/>
            <person name="Hernday A.D."/>
            <person name="Tuch B.B."/>
            <person name="Andes D.R."/>
            <person name="Johnson A.D."/>
        </authorList>
    </citation>
    <scope>INDUCTION</scope>
</reference>
<sequence length="223" mass="24815">MSDLKTTKDTLVSTLFELSKAAQDAANAAIEFYKVASGGSDHVSAEQLKAVSEALNTVATLSSGNGAKIEATESKKKRKQEKDPNAPKKPLTMFFQFSYDLRKKIGIERKKKDLPSLSAIDMNSMIKDRWDSISEAEKAGYKKRYDDAMIIYNIEKKKYEESLKDGSAYYPPPSVQTPIVGHGIEQDFDDDATDIVSSPEEPKKKKKKTEKKEKKKKSGHGSP</sequence>